<evidence type="ECO:0000250" key="1"/>
<evidence type="ECO:0000250" key="2">
    <source>
        <dbReference type="UniProtKB" id="Q07011"/>
    </source>
</evidence>
<evidence type="ECO:0000255" key="3"/>
<evidence type="ECO:0000269" key="4">
    <source>
    </source>
</evidence>
<evidence type="ECO:0000303" key="5">
    <source>
    </source>
</evidence>
<evidence type="ECO:0000305" key="6">
    <source>
    </source>
</evidence>
<evidence type="ECO:0007829" key="7">
    <source>
        <dbReference type="PDB" id="5WIW"/>
    </source>
</evidence>
<evidence type="ECO:0007829" key="8">
    <source>
        <dbReference type="PDB" id="5WJF"/>
    </source>
</evidence>
<proteinExistence type="evidence at protein level"/>
<gene>
    <name type="primary">Tnfrsf9</name>
    <name type="synonym">Cd137</name>
    <name type="synonym">Ila</name>
    <name type="synonym">Ly63</name>
</gene>
<comment type="function">
    <text evidence="2">Receptor for TNFSF9/4-1BBL. Conveys a signal that enhances CD8(+) T-cell survival, cytotoxicity, and mitochondrial activity, thereby promoting immunity against viruses and tumors (By similarity).</text>
</comment>
<comment type="subunit">
    <text evidence="1 4">Predominantly homodimeric, but may also exist as a monomer (PubMed:7678621). Associates with p56-LCK. Interacts with TRAF1, TRAF2 and TRAF3 (By similarity).</text>
</comment>
<comment type="interaction">
    <interactant intactId="EBI-520693">
        <id>P20334</id>
    </interactant>
    <interactant intactId="EBI-355744">
        <id>Q12933</id>
        <label>TRAF2</label>
    </interactant>
    <organismsDiffer>true</organismsDiffer>
    <experiments>2</experiments>
</comment>
<comment type="subcellular location">
    <subcellularLocation>
        <location>Cell membrane</location>
        <topology evidence="6">Single-pass type I membrane protein</topology>
    </subcellularLocation>
</comment>
<comment type="tissue specificity">
    <text evidence="4">Expressed in activated thymocytes, splenic T cells, CD4(+), and CD8(+) T-cells.</text>
</comment>
<comment type="induction">
    <text evidence="4">Up-regulated after cell treatment by PMA and ionomycin, suggesting that optimal expression requires both protein kinase C activation and increase in intracellular calcium.</text>
</comment>
<accession>P20334</accession>
<reference key="1">
    <citation type="journal article" date="1989" name="Proc. Natl. Acad. Sci. U.S.A.">
        <title>cDNA sequences of two inducible T-cell genes.</title>
        <authorList>
            <person name="Kwon B.S."/>
            <person name="Weissman S.M."/>
        </authorList>
    </citation>
    <scope>NUCLEOTIDE SEQUENCE [MRNA]</scope>
</reference>
<reference key="2">
    <citation type="journal article" date="1994" name="J. Immunol.">
        <title>Genomic organization and chromosomal localization of the T-cell antigen 4-1BB.</title>
        <authorList>
            <person name="Kwon B.S."/>
            <person name="Kozak C.A."/>
            <person name="Kim K.K."/>
            <person name="Pickard R.T."/>
        </authorList>
    </citation>
    <scope>NUCLEOTIDE SEQUENCE [GENOMIC DNA]</scope>
    <source>
        <strain>BALB/cJ</strain>
    </source>
</reference>
<reference key="3">
    <citation type="journal article" date="1993" name="J. Immunol.">
        <title>Inducible T cell antigen 4-1BB. Analysis of expression and function.</title>
        <authorList>
            <person name="Pollok K.E."/>
            <person name="Kim Y.-J."/>
            <person name="Zhou Z."/>
            <person name="Hurtado J."/>
            <person name="Kin K.K."/>
            <person name="Pickard R.T."/>
            <person name="Kwon B.S."/>
        </authorList>
    </citation>
    <scope>PROTEIN SEQUENCE OF 24-29</scope>
    <scope>HOMODIMERIZATION</scope>
    <scope>SUBCELLULAR LOCATION</scope>
    <scope>TISSUE SPECIFICITY</scope>
</reference>
<keyword id="KW-0002">3D-structure</keyword>
<keyword id="KW-1003">Cell membrane</keyword>
<keyword id="KW-0903">Direct protein sequencing</keyword>
<keyword id="KW-1015">Disulfide bond</keyword>
<keyword id="KW-0325">Glycoprotein</keyword>
<keyword id="KW-0472">Membrane</keyword>
<keyword id="KW-0675">Receptor</keyword>
<keyword id="KW-1185">Reference proteome</keyword>
<keyword id="KW-0677">Repeat</keyword>
<keyword id="KW-0732">Signal</keyword>
<keyword id="KW-0812">Transmembrane</keyword>
<keyword id="KW-1133">Transmembrane helix</keyword>
<dbReference type="EMBL" id="J04492">
    <property type="protein sequence ID" value="AAA40167.1"/>
    <property type="molecule type" value="mRNA"/>
</dbReference>
<dbReference type="EMBL" id="U02567">
    <property type="protein sequence ID" value="AAA93113.1"/>
    <property type="molecule type" value="Genomic_DNA"/>
</dbReference>
<dbReference type="CCDS" id="CCDS18976.1"/>
<dbReference type="PIR" id="B32393">
    <property type="entry name" value="B32393"/>
</dbReference>
<dbReference type="RefSeq" id="NP_001070977.1">
    <property type="nucleotide sequence ID" value="NM_001077509.1"/>
</dbReference>
<dbReference type="RefSeq" id="NP_035742.1">
    <property type="nucleotide sequence ID" value="NM_011612.2"/>
</dbReference>
<dbReference type="RefSeq" id="XP_011248530.1">
    <property type="nucleotide sequence ID" value="XM_011250228.3"/>
</dbReference>
<dbReference type="PDB" id="1D0J">
    <property type="method" value="X-ray"/>
    <property type="resolution" value="2.50 A"/>
    <property type="chains" value="G/H/I/J/K=231-236"/>
</dbReference>
<dbReference type="PDB" id="5WI8">
    <property type="method" value="X-ray"/>
    <property type="resolution" value="2.95 A"/>
    <property type="chains" value="A/B/C/D=24-160"/>
</dbReference>
<dbReference type="PDB" id="5WIW">
    <property type="method" value="X-ray"/>
    <property type="resolution" value="2.30 A"/>
    <property type="chains" value="A/B=24-160"/>
</dbReference>
<dbReference type="PDB" id="5WJF">
    <property type="method" value="X-ray"/>
    <property type="resolution" value="2.60 A"/>
    <property type="chains" value="A/B=24-160"/>
</dbReference>
<dbReference type="PDB" id="6MKZ">
    <property type="method" value="X-ray"/>
    <property type="resolution" value="2.65 A"/>
    <property type="chains" value="B/D=24-160"/>
</dbReference>
<dbReference type="PDBsum" id="1D0J"/>
<dbReference type="PDBsum" id="5WI8"/>
<dbReference type="PDBsum" id="5WIW"/>
<dbReference type="PDBsum" id="5WJF"/>
<dbReference type="PDBsum" id="6MKZ"/>
<dbReference type="SMR" id="P20334"/>
<dbReference type="BioGRID" id="204254">
    <property type="interactions" value="1"/>
</dbReference>
<dbReference type="DIP" id="DIP-1154N"/>
<dbReference type="FunCoup" id="P20334">
    <property type="interactions" value="657"/>
</dbReference>
<dbReference type="IntAct" id="P20334">
    <property type="interactions" value="4"/>
</dbReference>
<dbReference type="STRING" id="10090.ENSMUSP00000111961"/>
<dbReference type="GlyCosmos" id="P20334">
    <property type="glycosylation" value="2 sites, No reported glycans"/>
</dbReference>
<dbReference type="GlyGen" id="P20334">
    <property type="glycosylation" value="2 sites"/>
</dbReference>
<dbReference type="PhosphoSitePlus" id="P20334"/>
<dbReference type="PaxDb" id="10090-ENSMUSP00000030808"/>
<dbReference type="PeptideAtlas" id="P20334"/>
<dbReference type="ProteomicsDB" id="259147"/>
<dbReference type="ABCD" id="P20334">
    <property type="antibodies" value="4 sequenced antibodies"/>
</dbReference>
<dbReference type="Antibodypedia" id="3718">
    <property type="antibodies" value="1515 antibodies from 47 providers"/>
</dbReference>
<dbReference type="DNASU" id="21942"/>
<dbReference type="Ensembl" id="ENSMUST00000030808.10">
    <property type="protein sequence ID" value="ENSMUSP00000030808.4"/>
    <property type="gene ID" value="ENSMUSG00000028965.14"/>
</dbReference>
<dbReference type="Ensembl" id="ENSMUST00000105671.8">
    <property type="protein sequence ID" value="ENSMUSP00000101296.2"/>
    <property type="gene ID" value="ENSMUSG00000028965.14"/>
</dbReference>
<dbReference type="Ensembl" id="ENSMUST00000116257.8">
    <property type="protein sequence ID" value="ENSMUSP00000111961.2"/>
    <property type="gene ID" value="ENSMUSG00000028965.14"/>
</dbReference>
<dbReference type="GeneID" id="21942"/>
<dbReference type="KEGG" id="mmu:21942"/>
<dbReference type="UCSC" id="uc008vya.1">
    <property type="organism name" value="mouse"/>
</dbReference>
<dbReference type="AGR" id="MGI:1101059"/>
<dbReference type="CTD" id="3604"/>
<dbReference type="MGI" id="MGI:1101059">
    <property type="gene designation" value="Tnfrsf9"/>
</dbReference>
<dbReference type="VEuPathDB" id="HostDB:ENSMUSG00000028965"/>
<dbReference type="eggNOG" id="ENOG502S017">
    <property type="taxonomic scope" value="Eukaryota"/>
</dbReference>
<dbReference type="GeneTree" id="ENSGT00730000111279"/>
<dbReference type="InParanoid" id="P20334"/>
<dbReference type="OMA" id="YLFKQPF"/>
<dbReference type="OrthoDB" id="9423210at2759"/>
<dbReference type="PhylomeDB" id="P20334"/>
<dbReference type="TreeFam" id="TF336151"/>
<dbReference type="Reactome" id="R-MMU-5669034">
    <property type="pathway name" value="TNFs bind their physiological receptors"/>
</dbReference>
<dbReference type="BioGRID-ORCS" id="21942">
    <property type="hits" value="1 hit in 84 CRISPR screens"/>
</dbReference>
<dbReference type="ChiTaRS" id="Tnfrsf9">
    <property type="organism name" value="mouse"/>
</dbReference>
<dbReference type="EvolutionaryTrace" id="P20334"/>
<dbReference type="PRO" id="PR:P20334"/>
<dbReference type="Proteomes" id="UP000000589">
    <property type="component" value="Chromosome 4"/>
</dbReference>
<dbReference type="RNAct" id="P20334">
    <property type="molecule type" value="protein"/>
</dbReference>
<dbReference type="Bgee" id="ENSMUSG00000028965">
    <property type="expression patterns" value="Expressed in placenta labyrinth and 48 other cell types or tissues"/>
</dbReference>
<dbReference type="ExpressionAtlas" id="P20334">
    <property type="expression patterns" value="baseline and differential"/>
</dbReference>
<dbReference type="GO" id="GO:0009897">
    <property type="term" value="C:external side of plasma membrane"/>
    <property type="evidence" value="ECO:0000314"/>
    <property type="project" value="MGI"/>
</dbReference>
<dbReference type="GO" id="GO:0038023">
    <property type="term" value="F:signaling receptor activity"/>
    <property type="evidence" value="ECO:0000353"/>
    <property type="project" value="MGI"/>
</dbReference>
<dbReference type="GO" id="GO:0006915">
    <property type="term" value="P:apoptotic process"/>
    <property type="evidence" value="ECO:0007669"/>
    <property type="project" value="InterPro"/>
</dbReference>
<dbReference type="GO" id="GO:0008285">
    <property type="term" value="P:negative regulation of cell population proliferation"/>
    <property type="evidence" value="ECO:0007669"/>
    <property type="project" value="InterPro"/>
</dbReference>
<dbReference type="GO" id="GO:0033084">
    <property type="term" value="P:regulation of immature T cell proliferation in thymus"/>
    <property type="evidence" value="ECO:0000314"/>
    <property type="project" value="MGI"/>
</dbReference>
<dbReference type="CDD" id="cd13410">
    <property type="entry name" value="TNFRSF9"/>
    <property type="match status" value="1"/>
</dbReference>
<dbReference type="Gene3D" id="2.10.50.10">
    <property type="entry name" value="Tumor Necrosis Factor Receptor, subunit A, domain 2"/>
    <property type="match status" value="2"/>
</dbReference>
<dbReference type="InterPro" id="IPR001368">
    <property type="entry name" value="TNFR/NGFR_Cys_rich_reg"/>
</dbReference>
<dbReference type="InterPro" id="IPR020413">
    <property type="entry name" value="TNFR_9"/>
</dbReference>
<dbReference type="InterPro" id="IPR034020">
    <property type="entry name" value="TNFRSF9_N"/>
</dbReference>
<dbReference type="PANTHER" id="PTHR47139">
    <property type="entry name" value="TUMOR NECROSIS FACTOR RECEPTOR SUPERFAMILY MEMBER 9"/>
    <property type="match status" value="1"/>
</dbReference>
<dbReference type="PANTHER" id="PTHR47139:SF1">
    <property type="entry name" value="TUMOR NECROSIS FACTOR RECEPTOR SUPERFAMILY MEMBER 9"/>
    <property type="match status" value="1"/>
</dbReference>
<dbReference type="Pfam" id="PF00020">
    <property type="entry name" value="TNFR_c6"/>
    <property type="match status" value="1"/>
</dbReference>
<dbReference type="PRINTS" id="PR01924">
    <property type="entry name" value="TNFACTORR9"/>
</dbReference>
<dbReference type="SMART" id="SM00208">
    <property type="entry name" value="TNFR"/>
    <property type="match status" value="2"/>
</dbReference>
<dbReference type="SUPFAM" id="SSF57586">
    <property type="entry name" value="TNF receptor-like"/>
    <property type="match status" value="1"/>
</dbReference>
<dbReference type="PROSITE" id="PS00652">
    <property type="entry name" value="TNFR_NGFR_1"/>
    <property type="match status" value="1"/>
</dbReference>
<organism>
    <name type="scientific">Mus musculus</name>
    <name type="common">Mouse</name>
    <dbReference type="NCBI Taxonomy" id="10090"/>
    <lineage>
        <taxon>Eukaryota</taxon>
        <taxon>Metazoa</taxon>
        <taxon>Chordata</taxon>
        <taxon>Craniata</taxon>
        <taxon>Vertebrata</taxon>
        <taxon>Euteleostomi</taxon>
        <taxon>Mammalia</taxon>
        <taxon>Eutheria</taxon>
        <taxon>Euarchontoglires</taxon>
        <taxon>Glires</taxon>
        <taxon>Rodentia</taxon>
        <taxon>Myomorpha</taxon>
        <taxon>Muroidea</taxon>
        <taxon>Muridae</taxon>
        <taxon>Murinae</taxon>
        <taxon>Mus</taxon>
        <taxon>Mus</taxon>
    </lineage>
</organism>
<name>TNR9_MOUSE</name>
<feature type="signal peptide" evidence="4">
    <location>
        <begin position="1"/>
        <end position="23"/>
    </location>
</feature>
<feature type="chain" id="PRO_0000034578" description="Tumor necrosis factor receptor superfamily member 9">
    <location>
        <begin position="24"/>
        <end position="256"/>
    </location>
</feature>
<feature type="topological domain" description="Extracellular" evidence="3">
    <location>
        <begin position="24"/>
        <end position="187"/>
    </location>
</feature>
<feature type="transmembrane region" description="Helical" evidence="3">
    <location>
        <begin position="188"/>
        <end position="208"/>
    </location>
</feature>
<feature type="topological domain" description="Cytoplasmic" evidence="3">
    <location>
        <begin position="209"/>
        <end position="256"/>
    </location>
</feature>
<feature type="repeat" description="TNFR-Cys 1">
    <location>
        <begin position="24"/>
        <end position="45"/>
    </location>
</feature>
<feature type="repeat" description="TNFR-Cys 2">
    <location>
        <begin position="46"/>
        <end position="85"/>
    </location>
</feature>
<feature type="repeat" description="TNFR-Cys 3">
    <location>
        <begin position="86"/>
        <end position="117"/>
    </location>
</feature>
<feature type="repeat" description="TNFR-Cys 4">
    <location>
        <begin position="118"/>
        <end position="159"/>
    </location>
</feature>
<feature type="glycosylation site" description="N-linked (GlcNAc...) asparagine" evidence="3">
    <location>
        <position position="128"/>
    </location>
</feature>
<feature type="glycosylation site" description="N-linked (GlcNAc...) asparagine" evidence="3">
    <location>
        <position position="138"/>
    </location>
</feature>
<feature type="disulfide bond" evidence="1">
    <location>
        <begin position="28"/>
        <end position="37"/>
    </location>
</feature>
<feature type="disulfide bond" evidence="1">
    <location>
        <begin position="31"/>
        <end position="44"/>
    </location>
</feature>
<feature type="disulfide bond" evidence="1">
    <location>
        <begin position="47"/>
        <end position="61"/>
    </location>
</feature>
<feature type="disulfide bond" evidence="1">
    <location>
        <begin position="64"/>
        <end position="77"/>
    </location>
</feature>
<feature type="disulfide bond" evidence="1">
    <location>
        <begin position="67"/>
        <end position="85"/>
    </location>
</feature>
<feature type="disulfide bond" evidence="1">
    <location>
        <begin position="87"/>
        <end position="93"/>
    </location>
</feature>
<feature type="disulfide bond" evidence="1">
    <location>
        <begin position="98"/>
        <end position="105"/>
    </location>
</feature>
<feature type="disulfide bond" evidence="1">
    <location>
        <begin position="101"/>
        <end position="116"/>
    </location>
</feature>
<feature type="disulfide bond" evidence="1">
    <location>
        <begin position="119"/>
        <end position="133"/>
    </location>
</feature>
<feature type="disulfide bond" evidence="1">
    <location>
        <begin position="139"/>
        <end position="158"/>
    </location>
</feature>
<feature type="helix" evidence="8">
    <location>
        <begin position="28"/>
        <end position="30"/>
    </location>
</feature>
<feature type="strand" evidence="8">
    <location>
        <begin position="35"/>
        <end position="38"/>
    </location>
</feature>
<feature type="strand" evidence="8">
    <location>
        <begin position="41"/>
        <end position="46"/>
    </location>
</feature>
<feature type="strand" evidence="8">
    <location>
        <begin position="54"/>
        <end position="56"/>
    </location>
</feature>
<feature type="strand" evidence="8">
    <location>
        <begin position="58"/>
        <end position="60"/>
    </location>
</feature>
<feature type="strand" evidence="7">
    <location>
        <begin position="71"/>
        <end position="75"/>
    </location>
</feature>
<feature type="strand" evidence="7">
    <location>
        <begin position="79"/>
        <end position="81"/>
    </location>
</feature>
<feature type="strand" evidence="7">
    <location>
        <begin position="84"/>
        <end position="87"/>
    </location>
</feature>
<feature type="strand" evidence="7">
    <location>
        <begin position="91"/>
        <end position="95"/>
    </location>
</feature>
<feature type="strand" evidence="7">
    <location>
        <begin position="100"/>
        <end position="103"/>
    </location>
</feature>
<feature type="strand" evidence="7">
    <location>
        <begin position="109"/>
        <end position="112"/>
    </location>
</feature>
<feature type="strand" evidence="7">
    <location>
        <begin position="115"/>
        <end position="118"/>
    </location>
</feature>
<feature type="strand" evidence="7">
    <location>
        <begin position="127"/>
        <end position="130"/>
    </location>
</feature>
<feature type="turn" evidence="7">
    <location>
        <begin position="139"/>
        <end position="143"/>
    </location>
</feature>
<feature type="strand" evidence="7">
    <location>
        <begin position="144"/>
        <end position="148"/>
    </location>
</feature>
<feature type="strand" evidence="7">
    <location>
        <begin position="152"/>
        <end position="154"/>
    </location>
</feature>
<feature type="strand" evidence="7">
    <location>
        <begin position="157"/>
        <end position="160"/>
    </location>
</feature>
<sequence length="256" mass="27598">MGNNCYNVVVIVLLLVGCEKVGAVQNSCDNCQPGTFCRKYNPVCKSCPPSTFSSIGGQPNCNICRVCAGYFRFKKFCSSTHNAECECIEGFHCLGPQCTRCEKDCRPGQELTKQGCKTCSLGTFNDQNGTGVCRPWTNCSLDGRSVLKTGTTEKDVVCGPPVVSFSPSTTISVTPEGGPGGHSLQVLTLFLALTSALLLALIFITLLFSVLKWIRKKFPHIFKQPFKKTTGAAQEEDACSCRCPQEEEGGGGGYEL</sequence>
<protein>
    <recommendedName>
        <fullName>Tumor necrosis factor receptor superfamily member 9</fullName>
    </recommendedName>
    <alternativeName>
        <fullName>4-1BB ligand receptor</fullName>
    </alternativeName>
    <alternativeName>
        <fullName evidence="5">T-cell antigen 4-1BB</fullName>
    </alternativeName>
    <cdAntigenName>CD137</cdAntigenName>
</protein>